<keyword id="KW-1185">Reference proteome</keyword>
<keyword id="KW-0687">Ribonucleoprotein</keyword>
<keyword id="KW-0689">Ribosomal protein</keyword>
<sequence length="95" mass="10320">MSRRCELTGKGVQVGNNVSHANNKTKRRFLPNLNDVTLMSETLGRGFKLRISAAALRTVDHRGGLDSFLAKAKDAELSEKALKIKKDIAKAQAAA</sequence>
<evidence type="ECO:0000255" key="1">
    <source>
        <dbReference type="HAMAP-Rule" id="MF_00373"/>
    </source>
</evidence>
<evidence type="ECO:0000305" key="2"/>
<comment type="similarity">
    <text evidence="1">Belongs to the bacterial ribosomal protein bL28 family.</text>
</comment>
<name>RL28_DINSH</name>
<organism>
    <name type="scientific">Dinoroseobacter shibae (strain DSM 16493 / NCIMB 14021 / DFL 12)</name>
    <dbReference type="NCBI Taxonomy" id="398580"/>
    <lineage>
        <taxon>Bacteria</taxon>
        <taxon>Pseudomonadati</taxon>
        <taxon>Pseudomonadota</taxon>
        <taxon>Alphaproteobacteria</taxon>
        <taxon>Rhodobacterales</taxon>
        <taxon>Roseobacteraceae</taxon>
        <taxon>Dinoroseobacter</taxon>
    </lineage>
</organism>
<protein>
    <recommendedName>
        <fullName evidence="1">Large ribosomal subunit protein bL28</fullName>
    </recommendedName>
    <alternativeName>
        <fullName evidence="2">50S ribosomal protein L28</fullName>
    </alternativeName>
</protein>
<proteinExistence type="inferred from homology"/>
<gene>
    <name evidence="1" type="primary">rpmB</name>
    <name type="ordered locus">Dshi_2583</name>
</gene>
<reference key="1">
    <citation type="journal article" date="2010" name="ISME J.">
        <title>The complete genome sequence of the algal symbiont Dinoroseobacter shibae: a hitchhiker's guide to life in the sea.</title>
        <authorList>
            <person name="Wagner-Dobler I."/>
            <person name="Ballhausen B."/>
            <person name="Berger M."/>
            <person name="Brinkhoff T."/>
            <person name="Buchholz I."/>
            <person name="Bunk B."/>
            <person name="Cypionka H."/>
            <person name="Daniel R."/>
            <person name="Drepper T."/>
            <person name="Gerdts G."/>
            <person name="Hahnke S."/>
            <person name="Han C."/>
            <person name="Jahn D."/>
            <person name="Kalhoefer D."/>
            <person name="Kiss H."/>
            <person name="Klenk H.P."/>
            <person name="Kyrpides N."/>
            <person name="Liebl W."/>
            <person name="Liesegang H."/>
            <person name="Meincke L."/>
            <person name="Pati A."/>
            <person name="Petersen J."/>
            <person name="Piekarski T."/>
            <person name="Pommerenke C."/>
            <person name="Pradella S."/>
            <person name="Pukall R."/>
            <person name="Rabus R."/>
            <person name="Stackebrandt E."/>
            <person name="Thole S."/>
            <person name="Thompson L."/>
            <person name="Tielen P."/>
            <person name="Tomasch J."/>
            <person name="von Jan M."/>
            <person name="Wanphrut N."/>
            <person name="Wichels A."/>
            <person name="Zech H."/>
            <person name="Simon M."/>
        </authorList>
    </citation>
    <scope>NUCLEOTIDE SEQUENCE [LARGE SCALE GENOMIC DNA]</scope>
    <source>
        <strain>DSM 16493 / NCIMB 14021 / DFL 12</strain>
    </source>
</reference>
<dbReference type="EMBL" id="CP000830">
    <property type="protein sequence ID" value="ABV94316.1"/>
    <property type="molecule type" value="Genomic_DNA"/>
</dbReference>
<dbReference type="RefSeq" id="WP_012179244.1">
    <property type="nucleotide sequence ID" value="NC_009952.1"/>
</dbReference>
<dbReference type="SMR" id="A8LHY2"/>
<dbReference type="STRING" id="398580.Dshi_2583"/>
<dbReference type="KEGG" id="dsh:Dshi_2583"/>
<dbReference type="eggNOG" id="COG0227">
    <property type="taxonomic scope" value="Bacteria"/>
</dbReference>
<dbReference type="HOGENOM" id="CLU_064548_4_2_5"/>
<dbReference type="OrthoDB" id="9805609at2"/>
<dbReference type="Proteomes" id="UP000006833">
    <property type="component" value="Chromosome"/>
</dbReference>
<dbReference type="GO" id="GO:0022625">
    <property type="term" value="C:cytosolic large ribosomal subunit"/>
    <property type="evidence" value="ECO:0007669"/>
    <property type="project" value="TreeGrafter"/>
</dbReference>
<dbReference type="GO" id="GO:0003735">
    <property type="term" value="F:structural constituent of ribosome"/>
    <property type="evidence" value="ECO:0007669"/>
    <property type="project" value="InterPro"/>
</dbReference>
<dbReference type="GO" id="GO:0006412">
    <property type="term" value="P:translation"/>
    <property type="evidence" value="ECO:0007669"/>
    <property type="project" value="UniProtKB-UniRule"/>
</dbReference>
<dbReference type="Gene3D" id="2.30.170.40">
    <property type="entry name" value="Ribosomal protein L28/L24"/>
    <property type="match status" value="1"/>
</dbReference>
<dbReference type="HAMAP" id="MF_00373">
    <property type="entry name" value="Ribosomal_bL28"/>
    <property type="match status" value="1"/>
</dbReference>
<dbReference type="InterPro" id="IPR026569">
    <property type="entry name" value="Ribosomal_bL28"/>
</dbReference>
<dbReference type="InterPro" id="IPR034704">
    <property type="entry name" value="Ribosomal_bL28/bL31-like_sf"/>
</dbReference>
<dbReference type="InterPro" id="IPR001383">
    <property type="entry name" value="Ribosomal_bL28_bact-type"/>
</dbReference>
<dbReference type="InterPro" id="IPR037147">
    <property type="entry name" value="Ribosomal_bL28_sf"/>
</dbReference>
<dbReference type="NCBIfam" id="TIGR00009">
    <property type="entry name" value="L28"/>
    <property type="match status" value="1"/>
</dbReference>
<dbReference type="PANTHER" id="PTHR13528">
    <property type="entry name" value="39S RIBOSOMAL PROTEIN L28, MITOCHONDRIAL"/>
    <property type="match status" value="1"/>
</dbReference>
<dbReference type="PANTHER" id="PTHR13528:SF2">
    <property type="entry name" value="LARGE RIBOSOMAL SUBUNIT PROTEIN BL28M"/>
    <property type="match status" value="1"/>
</dbReference>
<dbReference type="Pfam" id="PF00830">
    <property type="entry name" value="Ribosomal_L28"/>
    <property type="match status" value="1"/>
</dbReference>
<dbReference type="SUPFAM" id="SSF143800">
    <property type="entry name" value="L28p-like"/>
    <property type="match status" value="1"/>
</dbReference>
<accession>A8LHY2</accession>
<feature type="chain" id="PRO_1000079847" description="Large ribosomal subunit protein bL28">
    <location>
        <begin position="1"/>
        <end position="95"/>
    </location>
</feature>